<evidence type="ECO:0000250" key="1"/>
<evidence type="ECO:0000255" key="2">
    <source>
        <dbReference type="PROSITE-ProRule" id="PRU01319"/>
    </source>
</evidence>
<evidence type="ECO:0000269" key="3">
    <source>
    </source>
</evidence>
<evidence type="ECO:0000305" key="4"/>
<evidence type="ECO:0007829" key="5">
    <source>
        <dbReference type="PDB" id="1IO2"/>
    </source>
</evidence>
<evidence type="ECO:0007829" key="6">
    <source>
        <dbReference type="PDB" id="1X1P"/>
    </source>
</evidence>
<evidence type="ECO:0007829" key="7">
    <source>
        <dbReference type="PDB" id="2DFE"/>
    </source>
</evidence>
<evidence type="ECO:0007829" key="8">
    <source>
        <dbReference type="PDB" id="2DFF"/>
    </source>
</evidence>
<organism>
    <name type="scientific">Thermococcus kodakarensis (strain ATCC BAA-918 / JCM 12380 / KOD1)</name>
    <name type="common">Pyrococcus kodakaraensis (strain KOD1)</name>
    <dbReference type="NCBI Taxonomy" id="69014"/>
    <lineage>
        <taxon>Archaea</taxon>
        <taxon>Methanobacteriati</taxon>
        <taxon>Methanobacteriota</taxon>
        <taxon>Thermococci</taxon>
        <taxon>Thermococcales</taxon>
        <taxon>Thermococcaceae</taxon>
        <taxon>Thermococcus</taxon>
    </lineage>
</organism>
<keyword id="KW-0002">3D-structure</keyword>
<keyword id="KW-0170">Cobalt</keyword>
<keyword id="KW-0963">Cytoplasm</keyword>
<keyword id="KW-0255">Endonuclease</keyword>
<keyword id="KW-0378">Hydrolase</keyword>
<keyword id="KW-0460">Magnesium</keyword>
<keyword id="KW-0479">Metal-binding</keyword>
<keyword id="KW-0540">Nuclease</keyword>
<keyword id="KW-1185">Reference proteome</keyword>
<gene>
    <name type="primary">rnhB</name>
    <name type="ordered locus">TK0805</name>
</gene>
<feature type="chain" id="PRO_0000111671" description="Ribonuclease HII">
    <location>
        <begin position="1"/>
        <end position="228"/>
    </location>
</feature>
<feature type="domain" description="RNase H type-2" evidence="2">
    <location>
        <begin position="1"/>
        <end position="210"/>
    </location>
</feature>
<feature type="binding site" evidence="1">
    <location>
        <position position="7"/>
    </location>
    <ligand>
        <name>a divalent metal cation</name>
        <dbReference type="ChEBI" id="CHEBI:60240"/>
    </ligand>
</feature>
<feature type="binding site" evidence="1">
    <location>
        <position position="8"/>
    </location>
    <ligand>
        <name>a divalent metal cation</name>
        <dbReference type="ChEBI" id="CHEBI:60240"/>
    </ligand>
</feature>
<feature type="binding site" evidence="1">
    <location>
        <position position="105"/>
    </location>
    <ligand>
        <name>a divalent metal cation</name>
        <dbReference type="ChEBI" id="CHEBI:60240"/>
    </ligand>
</feature>
<feature type="mutagenesis site" description="Loss of activity." evidence="3">
    <original>D</original>
    <variation>A</variation>
    <location>
        <position position="7"/>
    </location>
</feature>
<feature type="mutagenesis site" description="Reduces activity by 99%." evidence="3">
    <original>E</original>
    <variation>A</variation>
    <location>
        <position position="8"/>
    </location>
</feature>
<feature type="mutagenesis site" description="Loss of activity." evidence="3">
    <original>D</original>
    <variation>A</variation>
    <location>
        <position position="105"/>
    </location>
</feature>
<feature type="mutagenesis site" description="Reduces activity by 75%." evidence="3">
    <original>H</original>
    <variation>A</variation>
    <location>
        <position position="132"/>
    </location>
</feature>
<feature type="mutagenesis site" description="Reduces activity by 98%." evidence="3">
    <original>D</original>
    <variation>A</variation>
    <location>
        <position position="135"/>
    </location>
</feature>
<feature type="strand" evidence="5">
    <location>
        <begin position="2"/>
        <end position="9"/>
    </location>
</feature>
<feature type="strand" evidence="5">
    <location>
        <begin position="14"/>
        <end position="16"/>
    </location>
</feature>
<feature type="strand" evidence="5">
    <location>
        <begin position="18"/>
        <end position="26"/>
    </location>
</feature>
<feature type="helix" evidence="5">
    <location>
        <begin position="27"/>
        <end position="29"/>
    </location>
</feature>
<feature type="helix" evidence="5">
    <location>
        <begin position="30"/>
        <end position="35"/>
    </location>
</feature>
<feature type="helix" evidence="5">
    <location>
        <begin position="38"/>
        <end position="40"/>
    </location>
</feature>
<feature type="strand" evidence="8">
    <location>
        <begin position="42"/>
        <end position="44"/>
    </location>
</feature>
<feature type="helix" evidence="5">
    <location>
        <begin position="46"/>
        <end position="57"/>
    </location>
</feature>
<feature type="strand" evidence="5">
    <location>
        <begin position="61"/>
        <end position="68"/>
    </location>
</feature>
<feature type="helix" evidence="5">
    <location>
        <begin position="70"/>
        <end position="74"/>
    </location>
</feature>
<feature type="strand" evidence="7">
    <location>
        <begin position="76"/>
        <end position="79"/>
    </location>
</feature>
<feature type="helix" evidence="5">
    <location>
        <begin position="80"/>
        <end position="94"/>
    </location>
</feature>
<feature type="strand" evidence="5">
    <location>
        <begin position="100"/>
        <end position="105"/>
    </location>
</feature>
<feature type="helix" evidence="5">
    <location>
        <begin position="111"/>
        <end position="120"/>
    </location>
</feature>
<feature type="strand" evidence="6">
    <location>
        <begin position="122"/>
        <end position="124"/>
    </location>
</feature>
<feature type="strand" evidence="5">
    <location>
        <begin position="127"/>
        <end position="131"/>
    </location>
</feature>
<feature type="helix" evidence="5">
    <location>
        <begin position="134"/>
        <end position="137"/>
    </location>
</feature>
<feature type="helix" evidence="5">
    <location>
        <begin position="139"/>
        <end position="163"/>
    </location>
</feature>
<feature type="helix" evidence="5">
    <location>
        <begin position="174"/>
        <end position="187"/>
    </location>
</feature>
<feature type="helix" evidence="5">
    <location>
        <begin position="199"/>
        <end position="211"/>
    </location>
</feature>
<reference key="1">
    <citation type="journal article" date="1998" name="J. Bacteriol.">
        <title>Gene cloning and characterization of recombinant RNase HII from a hyperthermophilic archaeon.</title>
        <authorList>
            <person name="Haruki M."/>
            <person name="Hayashi K."/>
            <person name="Kochi T."/>
            <person name="Muroya A."/>
            <person name="Koga Y."/>
            <person name="Morikawa M."/>
            <person name="Imanaka T."/>
            <person name="Kanaya S."/>
        </authorList>
    </citation>
    <scope>NUCLEOTIDE SEQUENCE [GENOMIC DNA]</scope>
    <scope>CHARACTERIZATION</scope>
    <source>
        <strain>ATCC BAA-918 / JCM 12380 / KOD1</strain>
    </source>
</reference>
<reference key="2">
    <citation type="journal article" date="2005" name="Genome Res.">
        <title>Complete genome sequence of the hyperthermophilic archaeon Thermococcus kodakaraensis KOD1 and comparison with Pyrococcus genomes.</title>
        <authorList>
            <person name="Fukui T."/>
            <person name="Atomi H."/>
            <person name="Kanai T."/>
            <person name="Matsumi R."/>
            <person name="Fujiwara S."/>
            <person name="Imanaka T."/>
        </authorList>
    </citation>
    <scope>NUCLEOTIDE SEQUENCE [LARGE SCALE GENOMIC DNA]</scope>
    <source>
        <strain>ATCC BAA-918 / JCM 12380 / KOD1</strain>
    </source>
</reference>
<reference key="3">
    <citation type="journal article" date="2001" name="Protein Sci.">
        <title>Catalytic center of an archaeal type 2 ribonuclease H as revealed by X-ray crystallographic and mutational analyses.</title>
        <authorList>
            <person name="Muroya A."/>
            <person name="Tsuchiya D."/>
            <person name="Ishikawa M."/>
            <person name="Haruki M."/>
            <person name="Morikawa M."/>
            <person name="Kanaya S."/>
            <person name="Morikawa K."/>
        </authorList>
    </citation>
    <scope>X-RAY CRYSTALLOGRAPHY (2.0 ANGSTROMS) OF 1-213</scope>
    <scope>MUTAGENESIS OF ASP-7; GLU-8; ASP-105; HIS-132 AND ASP-135</scope>
    <source>
        <strain>ATCC BAA-918 / JCM 12380 / KOD1</strain>
    </source>
</reference>
<dbReference type="EC" id="3.1.26.4"/>
<dbReference type="EMBL" id="AB012613">
    <property type="protein sequence ID" value="BAA32803.1"/>
    <property type="molecule type" value="Genomic_DNA"/>
</dbReference>
<dbReference type="EMBL" id="AP006878">
    <property type="protein sequence ID" value="BAD84994.1"/>
    <property type="molecule type" value="Genomic_DNA"/>
</dbReference>
<dbReference type="PIR" id="T43891">
    <property type="entry name" value="T43891"/>
</dbReference>
<dbReference type="RefSeq" id="WP_011249756.1">
    <property type="nucleotide sequence ID" value="NC_006624.1"/>
</dbReference>
<dbReference type="PDB" id="1IO2">
    <property type="method" value="X-ray"/>
    <property type="resolution" value="2.00 A"/>
    <property type="chains" value="A=1-213"/>
</dbReference>
<dbReference type="PDB" id="1X1P">
    <property type="method" value="X-ray"/>
    <property type="resolution" value="2.80 A"/>
    <property type="chains" value="A=1-197"/>
</dbReference>
<dbReference type="PDB" id="2DFE">
    <property type="method" value="X-ray"/>
    <property type="resolution" value="2.40 A"/>
    <property type="chains" value="A=1-200"/>
</dbReference>
<dbReference type="PDB" id="2DFF">
    <property type="method" value="X-ray"/>
    <property type="resolution" value="2.70 A"/>
    <property type="chains" value="A=1-204"/>
</dbReference>
<dbReference type="PDB" id="2DFH">
    <property type="method" value="X-ray"/>
    <property type="resolution" value="2.27 A"/>
    <property type="chains" value="A=1-212"/>
</dbReference>
<dbReference type="PDBsum" id="1IO2"/>
<dbReference type="PDBsum" id="1X1P"/>
<dbReference type="PDBsum" id="2DFE"/>
<dbReference type="PDBsum" id="2DFF"/>
<dbReference type="PDBsum" id="2DFH"/>
<dbReference type="SMR" id="O74035"/>
<dbReference type="FunCoup" id="O74035">
    <property type="interactions" value="118"/>
</dbReference>
<dbReference type="STRING" id="69014.TK0805"/>
<dbReference type="EnsemblBacteria" id="BAD84994">
    <property type="protein sequence ID" value="BAD84994"/>
    <property type="gene ID" value="TK0805"/>
</dbReference>
<dbReference type="GeneID" id="78447321"/>
<dbReference type="KEGG" id="tko:TK0805"/>
<dbReference type="PATRIC" id="fig|69014.16.peg.785"/>
<dbReference type="eggNOG" id="arCOG04121">
    <property type="taxonomic scope" value="Archaea"/>
</dbReference>
<dbReference type="HOGENOM" id="CLU_036532_0_4_2"/>
<dbReference type="InParanoid" id="O74035"/>
<dbReference type="OrthoDB" id="33866at2157"/>
<dbReference type="PhylomeDB" id="O74035"/>
<dbReference type="BRENDA" id="3.1.26.4">
    <property type="organism ID" value="5246"/>
</dbReference>
<dbReference type="EvolutionaryTrace" id="O74035"/>
<dbReference type="Proteomes" id="UP000000536">
    <property type="component" value="Chromosome"/>
</dbReference>
<dbReference type="GO" id="GO:0005737">
    <property type="term" value="C:cytoplasm"/>
    <property type="evidence" value="ECO:0007669"/>
    <property type="project" value="UniProtKB-SubCell"/>
</dbReference>
<dbReference type="GO" id="GO:0032299">
    <property type="term" value="C:ribonuclease H2 complex"/>
    <property type="evidence" value="ECO:0000318"/>
    <property type="project" value="GO_Central"/>
</dbReference>
<dbReference type="GO" id="GO:0030145">
    <property type="term" value="F:manganese ion binding"/>
    <property type="evidence" value="ECO:0007669"/>
    <property type="project" value="UniProtKB-UniRule"/>
</dbReference>
<dbReference type="GO" id="GO:0003723">
    <property type="term" value="F:RNA binding"/>
    <property type="evidence" value="ECO:0007669"/>
    <property type="project" value="InterPro"/>
</dbReference>
<dbReference type="GO" id="GO:0004523">
    <property type="term" value="F:RNA-DNA hybrid ribonuclease activity"/>
    <property type="evidence" value="ECO:0000318"/>
    <property type="project" value="GO_Central"/>
</dbReference>
<dbReference type="GO" id="GO:0043137">
    <property type="term" value="P:DNA replication, removal of RNA primer"/>
    <property type="evidence" value="ECO:0000318"/>
    <property type="project" value="GO_Central"/>
</dbReference>
<dbReference type="GO" id="GO:0006298">
    <property type="term" value="P:mismatch repair"/>
    <property type="evidence" value="ECO:0000318"/>
    <property type="project" value="GO_Central"/>
</dbReference>
<dbReference type="CDD" id="cd07180">
    <property type="entry name" value="RNase_HII_archaea_like"/>
    <property type="match status" value="1"/>
</dbReference>
<dbReference type="FunFam" id="1.10.10.460:FF:000001">
    <property type="entry name" value="Ribonuclease"/>
    <property type="match status" value="1"/>
</dbReference>
<dbReference type="FunFam" id="3.30.420.10:FF:000139">
    <property type="entry name" value="Ribonuclease HII"/>
    <property type="match status" value="1"/>
</dbReference>
<dbReference type="Gene3D" id="3.30.420.10">
    <property type="entry name" value="Ribonuclease H-like superfamily/Ribonuclease H"/>
    <property type="match status" value="1"/>
</dbReference>
<dbReference type="Gene3D" id="1.10.10.460">
    <property type="entry name" value="Ribonuclease hii. Domain 2"/>
    <property type="match status" value="1"/>
</dbReference>
<dbReference type="HAMAP" id="MF_00052_A">
    <property type="entry name" value="RNase_HII_A"/>
    <property type="match status" value="1"/>
</dbReference>
<dbReference type="InterPro" id="IPR004649">
    <property type="entry name" value="RNase_H2_suA"/>
</dbReference>
<dbReference type="InterPro" id="IPR001352">
    <property type="entry name" value="RNase_HII/HIII"/>
</dbReference>
<dbReference type="InterPro" id="IPR024567">
    <property type="entry name" value="RNase_HII/HIII_dom"/>
</dbReference>
<dbReference type="InterPro" id="IPR020787">
    <property type="entry name" value="RNase_HII_arc"/>
</dbReference>
<dbReference type="InterPro" id="IPR023160">
    <property type="entry name" value="RNase_HII_hlx-loop-hlx_cap_dom"/>
</dbReference>
<dbReference type="InterPro" id="IPR012337">
    <property type="entry name" value="RNaseH-like_sf"/>
</dbReference>
<dbReference type="InterPro" id="IPR036397">
    <property type="entry name" value="RNaseH_sf"/>
</dbReference>
<dbReference type="NCBIfam" id="TIGR00729">
    <property type="entry name" value="ribonuclease HII"/>
    <property type="match status" value="1"/>
</dbReference>
<dbReference type="PANTHER" id="PTHR10954:SF23">
    <property type="entry name" value="RIBONUCLEASE"/>
    <property type="match status" value="1"/>
</dbReference>
<dbReference type="PANTHER" id="PTHR10954">
    <property type="entry name" value="RIBONUCLEASE H2 SUBUNIT A"/>
    <property type="match status" value="1"/>
</dbReference>
<dbReference type="Pfam" id="PF01351">
    <property type="entry name" value="RNase_HII"/>
    <property type="match status" value="1"/>
</dbReference>
<dbReference type="SUPFAM" id="SSF53098">
    <property type="entry name" value="Ribonuclease H-like"/>
    <property type="match status" value="1"/>
</dbReference>
<dbReference type="PROSITE" id="PS51975">
    <property type="entry name" value="RNASE_H_2"/>
    <property type="match status" value="1"/>
</dbReference>
<sequence length="228" mass="25801">MKIAGIDEAGRGPVIGPMVIAAVVVDENSLPKLEELKVRDSKKLTPKRREKLFNEILGVLDDYVILELPPDVIGSREGTLNEFEVENFAKALNSLKVKPDVIYADAADVDEERFARELGERLNFEAEVVAKHKADDIFPVVSAASILAKVTRDRAVEKLKEEYGEIGSGYPSDPRTRAFLENYYREHGEFPPIVRKGWKTLKKIAEKVESEKKAEERQATLDRYFRKV</sequence>
<accession>O74035</accession>
<proteinExistence type="evidence at protein level"/>
<name>RNH2_THEKO</name>
<protein>
    <recommendedName>
        <fullName>Ribonuclease HII</fullName>
        <shortName>RNase HII</shortName>
        <ecNumber>3.1.26.4</ecNumber>
    </recommendedName>
</protein>
<comment type="function">
    <text evidence="1">Endonuclease that specifically degrades the RNA of RNA-DNA hybrids.</text>
</comment>
<comment type="catalytic activity">
    <reaction>
        <text>Endonucleolytic cleavage to 5'-phosphomonoester.</text>
        <dbReference type="EC" id="3.1.26.4"/>
    </reaction>
</comment>
<comment type="cofactor">
    <cofactor evidence="1">
        <name>Mn(2+)</name>
        <dbReference type="ChEBI" id="CHEBI:29035"/>
    </cofactor>
    <cofactor evidence="1">
        <name>Mg(2+)</name>
        <dbReference type="ChEBI" id="CHEBI:18420"/>
    </cofactor>
    <text evidence="1">Manganese or magnesium. Binds 1 divalent metal ion per monomer in the absence of substrate. May bind a second metal ion after substrate binding.</text>
</comment>
<comment type="subunit">
    <text>Monomer.</text>
</comment>
<comment type="subcellular location">
    <subcellularLocation>
        <location evidence="4">Cytoplasm</location>
    </subcellularLocation>
</comment>
<comment type="similarity">
    <text evidence="4">Belongs to the RNase HII family.</text>
</comment>